<name>NUSB_PSELT</name>
<accession>A8F7D4</accession>
<dbReference type="EMBL" id="CP000812">
    <property type="protein sequence ID" value="ABV34068.1"/>
    <property type="molecule type" value="Genomic_DNA"/>
</dbReference>
<dbReference type="SMR" id="A8F7D4"/>
<dbReference type="STRING" id="416591.Tlet_1512"/>
<dbReference type="KEGG" id="tle:Tlet_1512"/>
<dbReference type="eggNOG" id="COG0781">
    <property type="taxonomic scope" value="Bacteria"/>
</dbReference>
<dbReference type="HOGENOM" id="CLU_087843_3_1_0"/>
<dbReference type="OrthoDB" id="9811381at2"/>
<dbReference type="Proteomes" id="UP000002016">
    <property type="component" value="Chromosome"/>
</dbReference>
<dbReference type="GO" id="GO:0005829">
    <property type="term" value="C:cytosol"/>
    <property type="evidence" value="ECO:0007669"/>
    <property type="project" value="TreeGrafter"/>
</dbReference>
<dbReference type="GO" id="GO:0003723">
    <property type="term" value="F:RNA binding"/>
    <property type="evidence" value="ECO:0007669"/>
    <property type="project" value="UniProtKB-UniRule"/>
</dbReference>
<dbReference type="GO" id="GO:0006353">
    <property type="term" value="P:DNA-templated transcription termination"/>
    <property type="evidence" value="ECO:0007669"/>
    <property type="project" value="UniProtKB-UniRule"/>
</dbReference>
<dbReference type="GO" id="GO:0031564">
    <property type="term" value="P:transcription antitermination"/>
    <property type="evidence" value="ECO:0007669"/>
    <property type="project" value="UniProtKB-KW"/>
</dbReference>
<dbReference type="CDD" id="cd00619">
    <property type="entry name" value="Terminator_NusB"/>
    <property type="match status" value="1"/>
</dbReference>
<dbReference type="Gene3D" id="1.10.940.10">
    <property type="entry name" value="NusB-like"/>
    <property type="match status" value="1"/>
</dbReference>
<dbReference type="HAMAP" id="MF_00073">
    <property type="entry name" value="NusB"/>
    <property type="match status" value="1"/>
</dbReference>
<dbReference type="InterPro" id="IPR035926">
    <property type="entry name" value="NusB-like_sf"/>
</dbReference>
<dbReference type="InterPro" id="IPR011605">
    <property type="entry name" value="NusB_fam"/>
</dbReference>
<dbReference type="InterPro" id="IPR006027">
    <property type="entry name" value="NusB_RsmB_TIM44"/>
</dbReference>
<dbReference type="NCBIfam" id="TIGR01951">
    <property type="entry name" value="nusB"/>
    <property type="match status" value="1"/>
</dbReference>
<dbReference type="PANTHER" id="PTHR11078:SF3">
    <property type="entry name" value="ANTITERMINATION NUSB DOMAIN-CONTAINING PROTEIN"/>
    <property type="match status" value="1"/>
</dbReference>
<dbReference type="PANTHER" id="PTHR11078">
    <property type="entry name" value="N UTILIZATION SUBSTANCE PROTEIN B-RELATED"/>
    <property type="match status" value="1"/>
</dbReference>
<dbReference type="Pfam" id="PF01029">
    <property type="entry name" value="NusB"/>
    <property type="match status" value="1"/>
</dbReference>
<dbReference type="SUPFAM" id="SSF48013">
    <property type="entry name" value="NusB-like"/>
    <property type="match status" value="1"/>
</dbReference>
<proteinExistence type="inferred from homology"/>
<evidence type="ECO:0000255" key="1">
    <source>
        <dbReference type="HAMAP-Rule" id="MF_00073"/>
    </source>
</evidence>
<comment type="function">
    <text evidence="1">Involved in transcription antitermination. Required for transcription of ribosomal RNA (rRNA) genes. Binds specifically to the boxA antiterminator sequence of the ribosomal RNA (rrn) operons.</text>
</comment>
<comment type="similarity">
    <text evidence="1">Belongs to the NusB family.</text>
</comment>
<sequence length="140" mass="16225">MTRRSKMRDLVFKVIFQNEFRNDSIETVLEDILHISKSGLMKADITRYVKGIYENLPSIDEKISLCLENWSLQRLSLVDRSILRLATYELLYESDVPIEVTLDEAVEIAKKYGTENSSKFVNGVLDKVAKSFAPEEKRYI</sequence>
<feature type="chain" id="PRO_1000192466" description="Transcription antitermination protein NusB">
    <location>
        <begin position="1"/>
        <end position="140"/>
    </location>
</feature>
<gene>
    <name evidence="1" type="primary">nusB</name>
    <name type="ordered locus">Tlet_1512</name>
</gene>
<protein>
    <recommendedName>
        <fullName evidence="1">Transcription antitermination protein NusB</fullName>
    </recommendedName>
    <alternativeName>
        <fullName evidence="1">Antitermination factor NusB</fullName>
    </alternativeName>
</protein>
<keyword id="KW-1185">Reference proteome</keyword>
<keyword id="KW-0694">RNA-binding</keyword>
<keyword id="KW-0804">Transcription</keyword>
<keyword id="KW-0889">Transcription antitermination</keyword>
<keyword id="KW-0805">Transcription regulation</keyword>
<organism>
    <name type="scientific">Pseudothermotoga lettingae (strain ATCC BAA-301 / DSM 14385 / NBRC 107922 / TMO)</name>
    <name type="common">Thermotoga lettingae</name>
    <dbReference type="NCBI Taxonomy" id="416591"/>
    <lineage>
        <taxon>Bacteria</taxon>
        <taxon>Thermotogati</taxon>
        <taxon>Thermotogota</taxon>
        <taxon>Thermotogae</taxon>
        <taxon>Thermotogales</taxon>
        <taxon>Thermotogaceae</taxon>
        <taxon>Pseudothermotoga</taxon>
    </lineage>
</organism>
<reference key="1">
    <citation type="submission" date="2007-08" db="EMBL/GenBank/DDBJ databases">
        <title>Complete sequence of Thermotoga lettingae TMO.</title>
        <authorList>
            <consortium name="US DOE Joint Genome Institute"/>
            <person name="Copeland A."/>
            <person name="Lucas S."/>
            <person name="Lapidus A."/>
            <person name="Barry K."/>
            <person name="Glavina del Rio T."/>
            <person name="Dalin E."/>
            <person name="Tice H."/>
            <person name="Pitluck S."/>
            <person name="Foster B."/>
            <person name="Bruce D."/>
            <person name="Schmutz J."/>
            <person name="Larimer F."/>
            <person name="Land M."/>
            <person name="Hauser L."/>
            <person name="Kyrpides N."/>
            <person name="Mikhailova N."/>
            <person name="Nelson K."/>
            <person name="Gogarten J.P."/>
            <person name="Noll K."/>
            <person name="Richardson P."/>
        </authorList>
    </citation>
    <scope>NUCLEOTIDE SEQUENCE [LARGE SCALE GENOMIC DNA]</scope>
    <source>
        <strain>ATCC BAA-301 / DSM 14385 / NBRC 107922 / TMO</strain>
    </source>
</reference>